<dbReference type="EC" id="2.7.4.6" evidence="1"/>
<dbReference type="EMBL" id="AJ248287">
    <property type="protein sequence ID" value="CAB50249.1"/>
    <property type="status" value="ALT_INIT"/>
    <property type="molecule type" value="Genomic_DNA"/>
</dbReference>
<dbReference type="EMBL" id="HE613800">
    <property type="protein sequence ID" value="CCE70786.1"/>
    <property type="status" value="ALT_INIT"/>
    <property type="molecule type" value="Genomic_DNA"/>
</dbReference>
<dbReference type="PIR" id="D75044">
    <property type="entry name" value="D75044"/>
</dbReference>
<dbReference type="RefSeq" id="WP_048146967.1">
    <property type="nucleotide sequence ID" value="NC_000868.1"/>
</dbReference>
<dbReference type="SMR" id="Q9UZ13"/>
<dbReference type="STRING" id="272844.PAB1489"/>
<dbReference type="KEGG" id="pab:PAB1489"/>
<dbReference type="PATRIC" id="fig|272844.11.peg.1428"/>
<dbReference type="eggNOG" id="arCOG04313">
    <property type="taxonomic scope" value="Archaea"/>
</dbReference>
<dbReference type="HOGENOM" id="CLU_060216_6_3_2"/>
<dbReference type="OrthoDB" id="6874at2157"/>
<dbReference type="PhylomeDB" id="Q9UZ13"/>
<dbReference type="Proteomes" id="UP000000810">
    <property type="component" value="Chromosome"/>
</dbReference>
<dbReference type="Proteomes" id="UP000009139">
    <property type="component" value="Chromosome"/>
</dbReference>
<dbReference type="GO" id="GO:0005737">
    <property type="term" value="C:cytoplasm"/>
    <property type="evidence" value="ECO:0007669"/>
    <property type="project" value="UniProtKB-SubCell"/>
</dbReference>
<dbReference type="GO" id="GO:0005524">
    <property type="term" value="F:ATP binding"/>
    <property type="evidence" value="ECO:0007669"/>
    <property type="project" value="UniProtKB-UniRule"/>
</dbReference>
<dbReference type="GO" id="GO:0046872">
    <property type="term" value="F:metal ion binding"/>
    <property type="evidence" value="ECO:0007669"/>
    <property type="project" value="UniProtKB-KW"/>
</dbReference>
<dbReference type="GO" id="GO:0004550">
    <property type="term" value="F:nucleoside diphosphate kinase activity"/>
    <property type="evidence" value="ECO:0007669"/>
    <property type="project" value="UniProtKB-UniRule"/>
</dbReference>
<dbReference type="GO" id="GO:0006241">
    <property type="term" value="P:CTP biosynthetic process"/>
    <property type="evidence" value="ECO:0007669"/>
    <property type="project" value="UniProtKB-UniRule"/>
</dbReference>
<dbReference type="GO" id="GO:0006183">
    <property type="term" value="P:GTP biosynthetic process"/>
    <property type="evidence" value="ECO:0007669"/>
    <property type="project" value="UniProtKB-UniRule"/>
</dbReference>
<dbReference type="GO" id="GO:0006228">
    <property type="term" value="P:UTP biosynthetic process"/>
    <property type="evidence" value="ECO:0007669"/>
    <property type="project" value="UniProtKB-UniRule"/>
</dbReference>
<dbReference type="CDD" id="cd04413">
    <property type="entry name" value="NDPk_I"/>
    <property type="match status" value="1"/>
</dbReference>
<dbReference type="FunFam" id="3.30.70.141:FF:000003">
    <property type="entry name" value="Nucleoside diphosphate kinase"/>
    <property type="match status" value="1"/>
</dbReference>
<dbReference type="Gene3D" id="3.30.70.141">
    <property type="entry name" value="Nucleoside diphosphate kinase-like domain"/>
    <property type="match status" value="1"/>
</dbReference>
<dbReference type="HAMAP" id="MF_00451">
    <property type="entry name" value="NDP_kinase"/>
    <property type="match status" value="1"/>
</dbReference>
<dbReference type="InterPro" id="IPR034907">
    <property type="entry name" value="NDK-like_dom"/>
</dbReference>
<dbReference type="InterPro" id="IPR036850">
    <property type="entry name" value="NDK-like_dom_sf"/>
</dbReference>
<dbReference type="InterPro" id="IPR001564">
    <property type="entry name" value="Nucleoside_diP_kinase"/>
</dbReference>
<dbReference type="InterPro" id="IPR023005">
    <property type="entry name" value="Nucleoside_diP_kinase_AS"/>
</dbReference>
<dbReference type="NCBIfam" id="NF001908">
    <property type="entry name" value="PRK00668.1"/>
    <property type="match status" value="1"/>
</dbReference>
<dbReference type="PANTHER" id="PTHR11349">
    <property type="entry name" value="NUCLEOSIDE DIPHOSPHATE KINASE"/>
    <property type="match status" value="1"/>
</dbReference>
<dbReference type="Pfam" id="PF00334">
    <property type="entry name" value="NDK"/>
    <property type="match status" value="1"/>
</dbReference>
<dbReference type="PRINTS" id="PR01243">
    <property type="entry name" value="NUCDPKINASE"/>
</dbReference>
<dbReference type="SMART" id="SM00562">
    <property type="entry name" value="NDK"/>
    <property type="match status" value="1"/>
</dbReference>
<dbReference type="SUPFAM" id="SSF54919">
    <property type="entry name" value="Nucleoside diphosphate kinase, NDK"/>
    <property type="match status" value="1"/>
</dbReference>
<dbReference type="PROSITE" id="PS00469">
    <property type="entry name" value="NDPK"/>
    <property type="match status" value="1"/>
</dbReference>
<dbReference type="PROSITE" id="PS51374">
    <property type="entry name" value="NDPK_LIKE"/>
    <property type="match status" value="1"/>
</dbReference>
<comment type="function">
    <text evidence="1">Major role in the synthesis of nucleoside triphosphates other than ATP. The ATP gamma phosphate is transferred to the NDP beta phosphate via a ping-pong mechanism, using a phosphorylated active-site intermediate.</text>
</comment>
<comment type="catalytic activity">
    <reaction evidence="1">
        <text>a 2'-deoxyribonucleoside 5'-diphosphate + ATP = a 2'-deoxyribonucleoside 5'-triphosphate + ADP</text>
        <dbReference type="Rhea" id="RHEA:44640"/>
        <dbReference type="ChEBI" id="CHEBI:30616"/>
        <dbReference type="ChEBI" id="CHEBI:61560"/>
        <dbReference type="ChEBI" id="CHEBI:73316"/>
        <dbReference type="ChEBI" id="CHEBI:456216"/>
        <dbReference type="EC" id="2.7.4.6"/>
    </reaction>
</comment>
<comment type="catalytic activity">
    <reaction evidence="1">
        <text>a ribonucleoside 5'-diphosphate + ATP = a ribonucleoside 5'-triphosphate + ADP</text>
        <dbReference type="Rhea" id="RHEA:18113"/>
        <dbReference type="ChEBI" id="CHEBI:30616"/>
        <dbReference type="ChEBI" id="CHEBI:57930"/>
        <dbReference type="ChEBI" id="CHEBI:61557"/>
        <dbReference type="ChEBI" id="CHEBI:456216"/>
        <dbReference type="EC" id="2.7.4.6"/>
    </reaction>
</comment>
<comment type="cofactor">
    <cofactor evidence="1">
        <name>Mg(2+)</name>
        <dbReference type="ChEBI" id="CHEBI:18420"/>
    </cofactor>
</comment>
<comment type="subcellular location">
    <subcellularLocation>
        <location evidence="1">Cytoplasm</location>
    </subcellularLocation>
</comment>
<comment type="similarity">
    <text evidence="1 2">Belongs to the NDK family.</text>
</comment>
<comment type="sequence caution" evidence="2">
    <conflict type="erroneous initiation">
        <sequence resource="EMBL-CDS" id="CAB50249"/>
    </conflict>
    <text>Extended N-terminus.</text>
</comment>
<comment type="sequence caution" evidence="2">
    <conflict type="erroneous initiation">
        <sequence resource="EMBL-CDS" id="CCE70786"/>
    </conflict>
    <text>Extended N-terminus.</text>
</comment>
<sequence length="159" mass="18324">MCENEKERTLVIIKPDAVIRGLIGEIISRFEKRGLKIVGMKMIWISKELAEKHYAEHREKPFFKSLVEYITRTPVVVMVVEGRCAIEVVRKMAGATDPKNAEPGTIRGDFALEVSDAICNVVHASDSKESAEREIKLYFRDDEIFDYPRAEDWFYRKGI</sequence>
<organism>
    <name type="scientific">Pyrococcus abyssi (strain GE5 / Orsay)</name>
    <dbReference type="NCBI Taxonomy" id="272844"/>
    <lineage>
        <taxon>Archaea</taxon>
        <taxon>Methanobacteriati</taxon>
        <taxon>Methanobacteriota</taxon>
        <taxon>Thermococci</taxon>
        <taxon>Thermococcales</taxon>
        <taxon>Thermococcaceae</taxon>
        <taxon>Pyrococcus</taxon>
    </lineage>
</organism>
<protein>
    <recommendedName>
        <fullName evidence="1">Nucleoside diphosphate kinase</fullName>
        <shortName evidence="1">NDK</shortName>
        <shortName evidence="1">NDP kinase</shortName>
        <ecNumber evidence="1">2.7.4.6</ecNumber>
    </recommendedName>
    <alternativeName>
        <fullName evidence="1">Nucleoside-2-P kinase</fullName>
    </alternativeName>
</protein>
<accession>Q9UZ13</accession>
<accession>G8ZHE9</accession>
<reference key="1">
    <citation type="journal article" date="2003" name="Mol. Microbiol.">
        <title>An integrated analysis of the genome of the hyperthermophilic archaeon Pyrococcus abyssi.</title>
        <authorList>
            <person name="Cohen G.N."/>
            <person name="Barbe V."/>
            <person name="Flament D."/>
            <person name="Galperin M."/>
            <person name="Heilig R."/>
            <person name="Lecompte O."/>
            <person name="Poch O."/>
            <person name="Prieur D."/>
            <person name="Querellou J."/>
            <person name="Ripp R."/>
            <person name="Thierry J.-C."/>
            <person name="Van der Oost J."/>
            <person name="Weissenbach J."/>
            <person name="Zivanovic Y."/>
            <person name="Forterre P."/>
        </authorList>
    </citation>
    <scope>NUCLEOTIDE SEQUENCE [LARGE SCALE GENOMIC DNA]</scope>
    <source>
        <strain>GE5 / Orsay</strain>
    </source>
</reference>
<reference key="2">
    <citation type="journal article" date="2012" name="Curr. Microbiol.">
        <title>Re-annotation of two hyperthermophilic archaea Pyrococcus abyssi GE5 and Pyrococcus furiosus DSM 3638.</title>
        <authorList>
            <person name="Gao J."/>
            <person name="Wang J."/>
        </authorList>
    </citation>
    <scope>GENOME REANNOTATION</scope>
    <source>
        <strain>GE5 / Orsay</strain>
    </source>
</reference>
<feature type="chain" id="PRO_0000137096" description="Nucleoside diphosphate kinase">
    <location>
        <begin position="1"/>
        <end position="159"/>
    </location>
</feature>
<feature type="active site" description="Pros-phosphohistidine intermediate" evidence="1">
    <location>
        <position position="123"/>
    </location>
</feature>
<feature type="binding site" evidence="1">
    <location>
        <position position="14"/>
    </location>
    <ligand>
        <name>ATP</name>
        <dbReference type="ChEBI" id="CHEBI:30616"/>
    </ligand>
</feature>
<feature type="binding site" evidence="1">
    <location>
        <position position="62"/>
    </location>
    <ligand>
        <name>ATP</name>
        <dbReference type="ChEBI" id="CHEBI:30616"/>
    </ligand>
</feature>
<feature type="binding site" evidence="1">
    <location>
        <position position="90"/>
    </location>
    <ligand>
        <name>ATP</name>
        <dbReference type="ChEBI" id="CHEBI:30616"/>
    </ligand>
</feature>
<feature type="binding site" evidence="1">
    <location>
        <position position="96"/>
    </location>
    <ligand>
        <name>ATP</name>
        <dbReference type="ChEBI" id="CHEBI:30616"/>
    </ligand>
</feature>
<feature type="binding site" evidence="1">
    <location>
        <position position="107"/>
    </location>
    <ligand>
        <name>ATP</name>
        <dbReference type="ChEBI" id="CHEBI:30616"/>
    </ligand>
</feature>
<proteinExistence type="inferred from homology"/>
<keyword id="KW-0067">ATP-binding</keyword>
<keyword id="KW-0963">Cytoplasm</keyword>
<keyword id="KW-0418">Kinase</keyword>
<keyword id="KW-0460">Magnesium</keyword>
<keyword id="KW-0479">Metal-binding</keyword>
<keyword id="KW-0546">Nucleotide metabolism</keyword>
<keyword id="KW-0547">Nucleotide-binding</keyword>
<keyword id="KW-0597">Phosphoprotein</keyword>
<keyword id="KW-0808">Transferase</keyword>
<gene>
    <name evidence="1" type="primary">ndk</name>
    <name type="ordered locus">PYRAB13440</name>
    <name type="ORF">PAB1489</name>
</gene>
<name>NDK_PYRAB</name>
<evidence type="ECO:0000255" key="1">
    <source>
        <dbReference type="HAMAP-Rule" id="MF_00451"/>
    </source>
</evidence>
<evidence type="ECO:0000305" key="2"/>